<feature type="chain" id="PRO_0000213646" description="Putative sugar uptake protein BCE_0220">
    <location>
        <begin position="1"/>
        <end position="283"/>
    </location>
</feature>
<feature type="transmembrane region" description="Helical" evidence="1">
    <location>
        <begin position="4"/>
        <end position="21"/>
    </location>
</feature>
<feature type="transmembrane region" description="Helical" evidence="1">
    <location>
        <begin position="26"/>
        <end position="48"/>
    </location>
</feature>
<feature type="transmembrane region" description="Helical" evidence="1">
    <location>
        <begin position="52"/>
        <end position="71"/>
    </location>
</feature>
<feature type="transmembrane region" description="Helical" evidence="1">
    <location>
        <begin position="84"/>
        <end position="106"/>
    </location>
</feature>
<feature type="transmembrane region" description="Helical" evidence="1">
    <location>
        <begin position="110"/>
        <end position="132"/>
    </location>
</feature>
<feature type="transmembrane region" description="Helical" evidence="1">
    <location>
        <begin position="151"/>
        <end position="173"/>
    </location>
</feature>
<feature type="transmembrane region" description="Helical" evidence="1">
    <location>
        <begin position="178"/>
        <end position="195"/>
    </location>
</feature>
<feature type="transmembrane region" description="Helical" evidence="1">
    <location>
        <begin position="208"/>
        <end position="230"/>
    </location>
</feature>
<feature type="transmembrane region" description="Helical" evidence="1">
    <location>
        <begin position="234"/>
        <end position="253"/>
    </location>
</feature>
<feature type="transmembrane region" description="Helical" evidence="1">
    <location>
        <begin position="260"/>
        <end position="279"/>
    </location>
</feature>
<name>Y220_BACC1</name>
<comment type="subcellular location">
    <subcellularLocation>
        <location evidence="2">Cell membrane</location>
        <topology evidence="2">Multi-pass membrane protein</topology>
    </subcellularLocation>
</comment>
<comment type="similarity">
    <text evidence="2">Belongs to the GRP transporter (TC 2.A.7.5) family.</text>
</comment>
<evidence type="ECO:0000255" key="1"/>
<evidence type="ECO:0000305" key="2"/>
<protein>
    <recommendedName>
        <fullName>Putative sugar uptake protein BCE_0220</fullName>
    </recommendedName>
</protein>
<reference key="1">
    <citation type="journal article" date="2004" name="Nucleic Acids Res.">
        <title>The genome sequence of Bacillus cereus ATCC 10987 reveals metabolic adaptations and a large plasmid related to Bacillus anthracis pXO1.</title>
        <authorList>
            <person name="Rasko D.A."/>
            <person name="Ravel J."/>
            <person name="Oekstad O.A."/>
            <person name="Helgason E."/>
            <person name="Cer R.Z."/>
            <person name="Jiang L."/>
            <person name="Shores K.A."/>
            <person name="Fouts D.E."/>
            <person name="Tourasse N.J."/>
            <person name="Angiuoli S.V."/>
            <person name="Kolonay J.F."/>
            <person name="Nelson W.C."/>
            <person name="Kolstoe A.-B."/>
            <person name="Fraser C.M."/>
            <person name="Read T.D."/>
        </authorList>
    </citation>
    <scope>NUCLEOTIDE SEQUENCE [LARGE SCALE GENOMIC DNA]</scope>
    <source>
        <strain>ATCC 10987 / NRS 248</strain>
    </source>
</reference>
<accession>P61403</accession>
<keyword id="KW-1003">Cell membrane</keyword>
<keyword id="KW-0472">Membrane</keyword>
<keyword id="KW-0762">Sugar transport</keyword>
<keyword id="KW-0812">Transmembrane</keyword>
<keyword id="KW-1133">Transmembrane helix</keyword>
<keyword id="KW-0813">Transport</keyword>
<organism>
    <name type="scientific">Bacillus cereus (strain ATCC 10987 / NRS 248)</name>
    <dbReference type="NCBI Taxonomy" id="222523"/>
    <lineage>
        <taxon>Bacteria</taxon>
        <taxon>Bacillati</taxon>
        <taxon>Bacillota</taxon>
        <taxon>Bacilli</taxon>
        <taxon>Bacillales</taxon>
        <taxon>Bacillaceae</taxon>
        <taxon>Bacillus</taxon>
        <taxon>Bacillus cereus group</taxon>
    </lineage>
</organism>
<dbReference type="EMBL" id="AE017194">
    <property type="protein sequence ID" value="AAS39156.1"/>
    <property type="molecule type" value="Genomic_DNA"/>
</dbReference>
<dbReference type="SMR" id="P61403"/>
<dbReference type="KEGG" id="bca:BCE_0220"/>
<dbReference type="HOGENOM" id="CLU_076024_0_0_9"/>
<dbReference type="Proteomes" id="UP000002527">
    <property type="component" value="Chromosome"/>
</dbReference>
<dbReference type="GO" id="GO:0005886">
    <property type="term" value="C:plasma membrane"/>
    <property type="evidence" value="ECO:0007669"/>
    <property type="project" value="UniProtKB-SubCell"/>
</dbReference>
<dbReference type="GO" id="GO:0015144">
    <property type="term" value="F:carbohydrate transmembrane transporter activity"/>
    <property type="evidence" value="ECO:0007669"/>
    <property type="project" value="InterPro"/>
</dbReference>
<dbReference type="CDD" id="cd23112">
    <property type="entry name" value="glucose_uptake_GlcU"/>
    <property type="match status" value="1"/>
</dbReference>
<dbReference type="Gene3D" id="1.10.3730.20">
    <property type="match status" value="1"/>
</dbReference>
<dbReference type="InterPro" id="IPR010651">
    <property type="entry name" value="Sugar_transport"/>
</dbReference>
<dbReference type="PANTHER" id="PTHR16119">
    <property type="entry name" value="TRANSMEMBRANE PROTEIN 144"/>
    <property type="match status" value="1"/>
</dbReference>
<dbReference type="PANTHER" id="PTHR16119:SF17">
    <property type="entry name" value="TRANSMEMBRANE PROTEIN 144"/>
    <property type="match status" value="1"/>
</dbReference>
<dbReference type="Pfam" id="PF06800">
    <property type="entry name" value="Sugar_transport"/>
    <property type="match status" value="1"/>
</dbReference>
<dbReference type="SUPFAM" id="SSF103481">
    <property type="entry name" value="Multidrug resistance efflux transporter EmrE"/>
    <property type="match status" value="2"/>
</dbReference>
<sequence length="283" mass="30190">MDILLALLPAIAWGNILLVSVKMGGGAYSQTVGMTIGALFFATIMYVFTQPALTMTILIVGFISGLFWALGQVNQLKTVEKLGVSTTVTISTGMQLVATSIFGVIAFREWTTTTTIILGTIAILLIVVGVVFTSLDDKENAQPPGQLKKGLLTLIVSTFGYLVYVIIIRWYNIDGWSAILPQAVGMFVGAVVLTSKHKPFNKYAIRNALSGLLWGTGNLFLLLSLPRVGVATSFPLSQTGIVISTFGAIVFLGEKKTKRQLIFIALGSVLIIGGAVLLGMTKA</sequence>
<proteinExistence type="inferred from homology"/>
<gene>
    <name type="ordered locus">BCE_0220</name>
</gene>